<dbReference type="EMBL" id="AY612608">
    <property type="protein sequence ID" value="AAT27472.1"/>
    <property type="molecule type" value="mRNA"/>
</dbReference>
<dbReference type="EMBL" id="AB005230">
    <property type="protein sequence ID" value="BAB11129.1"/>
    <property type="molecule type" value="Genomic_DNA"/>
</dbReference>
<dbReference type="EMBL" id="CP002688">
    <property type="protein sequence ID" value="AED91973.1"/>
    <property type="molecule type" value="Genomic_DNA"/>
</dbReference>
<dbReference type="RefSeq" id="NP_196905.1">
    <property type="nucleotide sequence ID" value="NM_121404.2"/>
</dbReference>
<dbReference type="IntAct" id="Q9FFX4">
    <property type="interactions" value="3"/>
</dbReference>
<dbReference type="STRING" id="3702.Q9FFX4"/>
<dbReference type="PaxDb" id="3702-AT5G14010.1"/>
<dbReference type="EnsemblPlants" id="AT5G14010.1">
    <property type="protein sequence ID" value="AT5G14010.1"/>
    <property type="gene ID" value="AT5G14010"/>
</dbReference>
<dbReference type="GeneID" id="831249"/>
<dbReference type="Gramene" id="AT5G14010.1">
    <property type="protein sequence ID" value="AT5G14010.1"/>
    <property type="gene ID" value="AT5G14010"/>
</dbReference>
<dbReference type="KEGG" id="ath:AT5G14010"/>
<dbReference type="Araport" id="AT5G14010"/>
<dbReference type="TAIR" id="AT5G14010">
    <property type="gene designation" value="KNU"/>
</dbReference>
<dbReference type="eggNOG" id="ENOG502S8MR">
    <property type="taxonomic scope" value="Eukaryota"/>
</dbReference>
<dbReference type="HOGENOM" id="CLU_1646041_0_0_1"/>
<dbReference type="InParanoid" id="Q9FFX4"/>
<dbReference type="OMA" id="RPYPCFY"/>
<dbReference type="OrthoDB" id="960395at2759"/>
<dbReference type="PhylomeDB" id="Q9FFX4"/>
<dbReference type="PRO" id="PR:Q9FFX4"/>
<dbReference type="Proteomes" id="UP000006548">
    <property type="component" value="Chromosome 5"/>
</dbReference>
<dbReference type="ExpressionAtlas" id="Q9FFX4">
    <property type="expression patterns" value="baseline and differential"/>
</dbReference>
<dbReference type="GO" id="GO:0005634">
    <property type="term" value="C:nucleus"/>
    <property type="evidence" value="ECO:0000314"/>
    <property type="project" value="TAIR"/>
</dbReference>
<dbReference type="GO" id="GO:0003677">
    <property type="term" value="F:DNA binding"/>
    <property type="evidence" value="ECO:0000314"/>
    <property type="project" value="TAIR"/>
</dbReference>
<dbReference type="GO" id="GO:0003700">
    <property type="term" value="F:DNA-binding transcription factor activity"/>
    <property type="evidence" value="ECO:0000250"/>
    <property type="project" value="TAIR"/>
</dbReference>
<dbReference type="GO" id="GO:0000976">
    <property type="term" value="F:transcription cis-regulatory region binding"/>
    <property type="evidence" value="ECO:0000353"/>
    <property type="project" value="TAIR"/>
</dbReference>
<dbReference type="GO" id="GO:0008270">
    <property type="term" value="F:zinc ion binding"/>
    <property type="evidence" value="ECO:0007669"/>
    <property type="project" value="UniProtKB-KW"/>
</dbReference>
<dbReference type="GO" id="GO:0030154">
    <property type="term" value="P:cell differentiation"/>
    <property type="evidence" value="ECO:0007669"/>
    <property type="project" value="UniProtKB-KW"/>
</dbReference>
<dbReference type="GO" id="GO:0010582">
    <property type="term" value="P:floral meristem determinacy"/>
    <property type="evidence" value="ECO:0000315"/>
    <property type="project" value="TAIR"/>
</dbReference>
<dbReference type="GO" id="GO:0009788">
    <property type="term" value="P:negative regulation of abscisic acid-activated signaling pathway"/>
    <property type="evidence" value="ECO:0007669"/>
    <property type="project" value="InterPro"/>
</dbReference>
<dbReference type="GO" id="GO:0006355">
    <property type="term" value="P:regulation of DNA-templated transcription"/>
    <property type="evidence" value="ECO:0000304"/>
    <property type="project" value="TAIR"/>
</dbReference>
<dbReference type="GO" id="GO:0009909">
    <property type="term" value="P:regulation of flower development"/>
    <property type="evidence" value="ECO:0000315"/>
    <property type="project" value="TAIR"/>
</dbReference>
<dbReference type="FunFam" id="3.30.160.60:FF:001366">
    <property type="entry name" value="Zinc finger protein 2"/>
    <property type="match status" value="1"/>
</dbReference>
<dbReference type="Gene3D" id="3.30.160.60">
    <property type="entry name" value="Classic Zinc Finger"/>
    <property type="match status" value="1"/>
</dbReference>
<dbReference type="InterPro" id="IPR044246">
    <property type="entry name" value="ZFP3-like"/>
</dbReference>
<dbReference type="InterPro" id="IPR036236">
    <property type="entry name" value="Znf_C2H2_sf"/>
</dbReference>
<dbReference type="InterPro" id="IPR013087">
    <property type="entry name" value="Znf_C2H2_type"/>
</dbReference>
<dbReference type="PANTHER" id="PTHR47287">
    <property type="entry name" value="C2H2 AND C2HC ZINC FINGERS SUPERFAMILY PROTEIN"/>
    <property type="match status" value="1"/>
</dbReference>
<dbReference type="PANTHER" id="PTHR47287:SF15">
    <property type="entry name" value="ZINC FINGER PROTEIN 3-LIKE"/>
    <property type="match status" value="1"/>
</dbReference>
<dbReference type="SUPFAM" id="SSF57667">
    <property type="entry name" value="beta-beta-alpha zinc fingers"/>
    <property type="match status" value="1"/>
</dbReference>
<dbReference type="PROSITE" id="PS00028">
    <property type="entry name" value="ZINC_FINGER_C2H2_1"/>
    <property type="match status" value="1"/>
</dbReference>
<dbReference type="PROSITE" id="PS50157">
    <property type="entry name" value="ZINC_FINGER_C2H2_2"/>
    <property type="match status" value="1"/>
</dbReference>
<gene>
    <name type="primary">KNU</name>
    <name type="ordered locus">At5g14010</name>
    <name type="ORF">MAC12.2</name>
</gene>
<organism>
    <name type="scientific">Arabidopsis thaliana</name>
    <name type="common">Mouse-ear cress</name>
    <dbReference type="NCBI Taxonomy" id="3702"/>
    <lineage>
        <taxon>Eukaryota</taxon>
        <taxon>Viridiplantae</taxon>
        <taxon>Streptophyta</taxon>
        <taxon>Embryophyta</taxon>
        <taxon>Tracheophyta</taxon>
        <taxon>Spermatophyta</taxon>
        <taxon>Magnoliopsida</taxon>
        <taxon>eudicotyledons</taxon>
        <taxon>Gunneridae</taxon>
        <taxon>Pentapetalae</taxon>
        <taxon>rosids</taxon>
        <taxon>malvids</taxon>
        <taxon>Brassicales</taxon>
        <taxon>Brassicaceae</taxon>
        <taxon>Camelineae</taxon>
        <taxon>Arabidopsis</taxon>
    </lineage>
</organism>
<proteinExistence type="evidence at protein level"/>
<reference key="1">
    <citation type="journal article" date="2004" name="Development">
        <title>KNUCKLES (KNU) encodes a C2H2 zinc-finger protein that regulates development of basal pattern elements of the Arabidopsis gynoecium.</title>
        <authorList>
            <person name="Payne T."/>
            <person name="Johnson S.D."/>
            <person name="Koltunow A.M."/>
        </authorList>
    </citation>
    <scope>NUCLEOTIDE SEQUENCE [MRNA]</scope>
    <scope>FUNCTION</scope>
    <scope>TISSUE SPECIFICITY</scope>
    <scope>MUTAGENESIS OF CYS-43</scope>
</reference>
<reference key="2">
    <citation type="journal article" date="1997" name="DNA Res.">
        <title>Structural analysis of Arabidopsis thaliana chromosome 5. I. Sequence features of the 1.6 Mb regions covered by twenty physically assigned P1 clones.</title>
        <authorList>
            <person name="Sato S."/>
            <person name="Kotani H."/>
            <person name="Nakamura Y."/>
            <person name="Kaneko T."/>
            <person name="Asamizu E."/>
            <person name="Fukami M."/>
            <person name="Miyajima N."/>
            <person name="Tabata S."/>
        </authorList>
    </citation>
    <scope>NUCLEOTIDE SEQUENCE [LARGE SCALE GENOMIC DNA]</scope>
    <source>
        <strain>cv. Columbia</strain>
    </source>
</reference>
<reference key="3">
    <citation type="journal article" date="2017" name="Plant J.">
        <title>Araport11: a complete reannotation of the Arabidopsis thaliana reference genome.</title>
        <authorList>
            <person name="Cheng C.Y."/>
            <person name="Krishnakumar V."/>
            <person name="Chan A.P."/>
            <person name="Thibaud-Nissen F."/>
            <person name="Schobel S."/>
            <person name="Town C.D."/>
        </authorList>
    </citation>
    <scope>GENOME REANNOTATION</scope>
    <source>
        <strain>cv. Columbia</strain>
    </source>
</reference>
<name>KNU_ARATH</name>
<comment type="function">
    <text evidence="4">May function as a transcriptional repressor of cellular proliferation that regulates floral determinacy and relative size of basal pattern elements along the proximo-distal axis of the developing gynoecium.</text>
</comment>
<comment type="subcellular location">
    <subcellularLocation>
        <location evidence="5">Nucleus</location>
    </subcellularLocation>
</comment>
<comment type="tissue specificity">
    <text evidence="4">First expressed in developing carpel primordia, and later in stamens and ovules of flower buds.</text>
</comment>
<comment type="domain">
    <text evidence="1">Contains a slightly degenerated ERF-associated amphiphilic repression (EAR) motif, which may be involved in the activity of transcriptional repression.</text>
</comment>
<accession>Q9FFX4</accession>
<keyword id="KW-0217">Developmental protein</keyword>
<keyword id="KW-0221">Differentiation</keyword>
<keyword id="KW-0287">Flowering</keyword>
<keyword id="KW-0479">Metal-binding</keyword>
<keyword id="KW-0539">Nucleus</keyword>
<keyword id="KW-1185">Reference proteome</keyword>
<keyword id="KW-0678">Repressor</keyword>
<keyword id="KW-0804">Transcription</keyword>
<keyword id="KW-0805">Transcription regulation</keyword>
<keyword id="KW-0862">Zinc</keyword>
<keyword id="KW-0863">Zinc-finger</keyword>
<protein>
    <recommendedName>
        <fullName>Zinc finger protein KNUCKLES</fullName>
    </recommendedName>
</protein>
<feature type="chain" id="PRO_0000047837" description="Zinc finger protein KNUCKLES">
    <location>
        <begin position="1"/>
        <end position="161"/>
    </location>
</feature>
<feature type="zinc finger region" description="C2H2-type" evidence="2">
    <location>
        <begin position="38"/>
        <end position="60"/>
    </location>
</feature>
<feature type="region of interest" description="Disordered" evidence="3">
    <location>
        <begin position="1"/>
        <end position="33"/>
    </location>
</feature>
<feature type="region of interest" description="Disordered" evidence="3">
    <location>
        <begin position="142"/>
        <end position="161"/>
    </location>
</feature>
<feature type="short sequence motif" description="EAR-like (transcriptional repression)">
    <location>
        <begin position="155"/>
        <end position="159"/>
    </location>
</feature>
<feature type="mutagenesis site" description="In knu; induces flowers that are conditionally male sterile and contains ectopic stamens and carpels that originate from placental tissue within developing gynoecia." evidence="4">
    <original>C</original>
    <variation>Y</variation>
    <location>
        <position position="43"/>
    </location>
</feature>
<evidence type="ECO:0000250" key="1"/>
<evidence type="ECO:0000255" key="2">
    <source>
        <dbReference type="PROSITE-ProRule" id="PRU00042"/>
    </source>
</evidence>
<evidence type="ECO:0000256" key="3">
    <source>
        <dbReference type="SAM" id="MobiDB-lite"/>
    </source>
</evidence>
<evidence type="ECO:0000269" key="4">
    <source>
    </source>
</evidence>
<evidence type="ECO:0000305" key="5"/>
<sequence length="161" mass="18049">MAEPPPSYLHFVGPAKTRSSSKRHSFSSSAHPASHRLFPCQYCPRKFYTSQALGGHQNAHKRERAAARRNLGVLANSPPILDDNNTFLRPYPCFYQNPFQGSTSGNEPLQEQPTMMTMDGYDPFHPYPYVYPFALSGNNNDGGNGVMEEDEPLDLDLSLRL</sequence>